<name>FABA_BRASB</name>
<reference key="1">
    <citation type="journal article" date="2007" name="Science">
        <title>Legumes symbioses: absence of nod genes in photosynthetic bradyrhizobia.</title>
        <authorList>
            <person name="Giraud E."/>
            <person name="Moulin L."/>
            <person name="Vallenet D."/>
            <person name="Barbe V."/>
            <person name="Cytryn E."/>
            <person name="Avarre J.-C."/>
            <person name="Jaubert M."/>
            <person name="Simon D."/>
            <person name="Cartieaux F."/>
            <person name="Prin Y."/>
            <person name="Bena G."/>
            <person name="Hannibal L."/>
            <person name="Fardoux J."/>
            <person name="Kojadinovic M."/>
            <person name="Vuillet L."/>
            <person name="Lajus A."/>
            <person name="Cruveiller S."/>
            <person name="Rouy Z."/>
            <person name="Mangenot S."/>
            <person name="Segurens B."/>
            <person name="Dossat C."/>
            <person name="Franck W.L."/>
            <person name="Chang W.-S."/>
            <person name="Saunders E."/>
            <person name="Bruce D."/>
            <person name="Richardson P."/>
            <person name="Normand P."/>
            <person name="Dreyfus B."/>
            <person name="Pignol D."/>
            <person name="Stacey G."/>
            <person name="Emerich D."/>
            <person name="Vermeglio A."/>
            <person name="Medigue C."/>
            <person name="Sadowsky M."/>
        </authorList>
    </citation>
    <scope>NUCLEOTIDE SEQUENCE [LARGE SCALE GENOMIC DNA]</scope>
    <source>
        <strain>BTAi1 / ATCC BAA-1182</strain>
    </source>
</reference>
<comment type="function">
    <text evidence="1">Necessary for the introduction of cis unsaturation into fatty acids. Catalyzes the dehydration of (3R)-3-hydroxydecanoyl-ACP to E-(2)-decenoyl-ACP and then its isomerization to Z-(3)-decenoyl-ACP. Can catalyze the dehydratase reaction for beta-hydroxyacyl-ACPs with saturated chain lengths up to 16:0, being most active on intermediate chain length.</text>
</comment>
<comment type="catalytic activity">
    <reaction evidence="1">
        <text>a (3R)-hydroxyacyl-[ACP] = a (2E)-enoyl-[ACP] + H2O</text>
        <dbReference type="Rhea" id="RHEA:13097"/>
        <dbReference type="Rhea" id="RHEA-COMP:9925"/>
        <dbReference type="Rhea" id="RHEA-COMP:9945"/>
        <dbReference type="ChEBI" id="CHEBI:15377"/>
        <dbReference type="ChEBI" id="CHEBI:78784"/>
        <dbReference type="ChEBI" id="CHEBI:78827"/>
        <dbReference type="EC" id="4.2.1.59"/>
    </reaction>
</comment>
<comment type="catalytic activity">
    <reaction evidence="1">
        <text>(3R)-hydroxydecanoyl-[ACP] = (2E)-decenoyl-[ACP] + H2O</text>
        <dbReference type="Rhea" id="RHEA:41860"/>
        <dbReference type="Rhea" id="RHEA-COMP:9638"/>
        <dbReference type="Rhea" id="RHEA-COMP:9639"/>
        <dbReference type="ChEBI" id="CHEBI:15377"/>
        <dbReference type="ChEBI" id="CHEBI:78466"/>
        <dbReference type="ChEBI" id="CHEBI:78467"/>
    </reaction>
</comment>
<comment type="catalytic activity">
    <reaction evidence="1">
        <text>(2E)-decenoyl-[ACP] = (3Z)-decenoyl-[ACP]</text>
        <dbReference type="Rhea" id="RHEA:23568"/>
        <dbReference type="Rhea" id="RHEA-COMP:9639"/>
        <dbReference type="Rhea" id="RHEA-COMP:9927"/>
        <dbReference type="ChEBI" id="CHEBI:78467"/>
        <dbReference type="ChEBI" id="CHEBI:78798"/>
        <dbReference type="EC" id="5.3.3.14"/>
    </reaction>
</comment>
<comment type="pathway">
    <text evidence="1">Lipid metabolism; fatty acid biosynthesis.</text>
</comment>
<comment type="subunit">
    <text evidence="1">Homodimer.</text>
</comment>
<comment type="subcellular location">
    <subcellularLocation>
        <location evidence="1">Cytoplasm</location>
    </subcellularLocation>
</comment>
<comment type="similarity">
    <text evidence="1">Belongs to the thioester dehydratase family. FabA subfamily.</text>
</comment>
<sequence length="173" mass="19089">MPDRRSVYEYEDLLACGRGELFGPGNAQLPLPPMLMFDRIVEITETGGEFGKGVVRAELDVKPDLWFFACHFKNDPVMPGCLGLDAMWQMVGFFLGWSGGEGRGRALGLGDLKFSGQVLPTARKVVYNVDIKRVMRSKLVLGIADGWLSMDGEIIYRAKDLKVGLFKQGATPS</sequence>
<organism>
    <name type="scientific">Bradyrhizobium sp. (strain BTAi1 / ATCC BAA-1182)</name>
    <dbReference type="NCBI Taxonomy" id="288000"/>
    <lineage>
        <taxon>Bacteria</taxon>
        <taxon>Pseudomonadati</taxon>
        <taxon>Pseudomonadota</taxon>
        <taxon>Alphaproteobacteria</taxon>
        <taxon>Hyphomicrobiales</taxon>
        <taxon>Nitrobacteraceae</taxon>
        <taxon>Bradyrhizobium</taxon>
    </lineage>
</organism>
<accession>A5E877</accession>
<dbReference type="EC" id="4.2.1.59" evidence="1"/>
<dbReference type="EC" id="5.3.3.14" evidence="1"/>
<dbReference type="EMBL" id="CP000494">
    <property type="protein sequence ID" value="ABQ32371.1"/>
    <property type="molecule type" value="Genomic_DNA"/>
</dbReference>
<dbReference type="RefSeq" id="WP_011942594.1">
    <property type="nucleotide sequence ID" value="NC_009485.1"/>
</dbReference>
<dbReference type="SMR" id="A5E877"/>
<dbReference type="STRING" id="288000.BBta_0069"/>
<dbReference type="KEGG" id="bbt:BBta_0069"/>
<dbReference type="eggNOG" id="COG0764">
    <property type="taxonomic scope" value="Bacteria"/>
</dbReference>
<dbReference type="HOGENOM" id="CLU_097925_0_0_5"/>
<dbReference type="OrthoDB" id="9786735at2"/>
<dbReference type="UniPathway" id="UPA00094"/>
<dbReference type="Proteomes" id="UP000000246">
    <property type="component" value="Chromosome"/>
</dbReference>
<dbReference type="GO" id="GO:0005737">
    <property type="term" value="C:cytoplasm"/>
    <property type="evidence" value="ECO:0007669"/>
    <property type="project" value="UniProtKB-SubCell"/>
</dbReference>
<dbReference type="GO" id="GO:0019171">
    <property type="term" value="F:(3R)-hydroxyacyl-[acyl-carrier-protein] dehydratase activity"/>
    <property type="evidence" value="ECO:0007669"/>
    <property type="project" value="UniProtKB-UniRule"/>
</dbReference>
<dbReference type="GO" id="GO:0034017">
    <property type="term" value="F:trans-2-decenoyl-acyl-carrier-protein isomerase activity"/>
    <property type="evidence" value="ECO:0007669"/>
    <property type="project" value="UniProtKB-UniRule"/>
</dbReference>
<dbReference type="GO" id="GO:0006636">
    <property type="term" value="P:unsaturated fatty acid biosynthetic process"/>
    <property type="evidence" value="ECO:0007669"/>
    <property type="project" value="UniProtKB-UniRule"/>
</dbReference>
<dbReference type="CDD" id="cd01287">
    <property type="entry name" value="FabA"/>
    <property type="match status" value="1"/>
</dbReference>
<dbReference type="Gene3D" id="3.10.129.10">
    <property type="entry name" value="Hotdog Thioesterase"/>
    <property type="match status" value="1"/>
</dbReference>
<dbReference type="HAMAP" id="MF_00405">
    <property type="entry name" value="FabA"/>
    <property type="match status" value="1"/>
</dbReference>
<dbReference type="InterPro" id="IPR010083">
    <property type="entry name" value="FabA"/>
</dbReference>
<dbReference type="InterPro" id="IPR013114">
    <property type="entry name" value="FabA_FabZ"/>
</dbReference>
<dbReference type="InterPro" id="IPR029069">
    <property type="entry name" value="HotDog_dom_sf"/>
</dbReference>
<dbReference type="NCBIfam" id="TIGR01749">
    <property type="entry name" value="fabA"/>
    <property type="match status" value="1"/>
</dbReference>
<dbReference type="NCBIfam" id="NF003509">
    <property type="entry name" value="PRK05174.1"/>
    <property type="match status" value="1"/>
</dbReference>
<dbReference type="PANTHER" id="PTHR30272">
    <property type="entry name" value="3-HYDROXYACYL-[ACYL-CARRIER-PROTEIN] DEHYDRATASE"/>
    <property type="match status" value="1"/>
</dbReference>
<dbReference type="PANTHER" id="PTHR30272:SF8">
    <property type="entry name" value="3-HYDROXYDECANOYL-[ACYL-CARRIER-PROTEIN] DEHYDRATASE"/>
    <property type="match status" value="1"/>
</dbReference>
<dbReference type="Pfam" id="PF07977">
    <property type="entry name" value="FabA"/>
    <property type="match status" value="1"/>
</dbReference>
<dbReference type="SUPFAM" id="SSF54637">
    <property type="entry name" value="Thioesterase/thiol ester dehydrase-isomerase"/>
    <property type="match status" value="1"/>
</dbReference>
<evidence type="ECO:0000255" key="1">
    <source>
        <dbReference type="HAMAP-Rule" id="MF_00405"/>
    </source>
</evidence>
<proteinExistence type="inferred from homology"/>
<gene>
    <name evidence="1" type="primary">fabA</name>
    <name type="ordered locus">BBta_0069</name>
</gene>
<feature type="chain" id="PRO_0000301870" description="3-hydroxydecanoyl-[acyl-carrier-protein] dehydratase">
    <location>
        <begin position="1"/>
        <end position="173"/>
    </location>
</feature>
<feature type="active site" evidence="1">
    <location>
        <position position="71"/>
    </location>
</feature>
<keyword id="KW-0963">Cytoplasm</keyword>
<keyword id="KW-0275">Fatty acid biosynthesis</keyword>
<keyword id="KW-0276">Fatty acid metabolism</keyword>
<keyword id="KW-0413">Isomerase</keyword>
<keyword id="KW-0444">Lipid biosynthesis</keyword>
<keyword id="KW-0443">Lipid metabolism</keyword>
<keyword id="KW-0456">Lyase</keyword>
<keyword id="KW-1185">Reference proteome</keyword>
<protein>
    <recommendedName>
        <fullName evidence="1">3-hydroxydecanoyl-[acyl-carrier-protein] dehydratase</fullName>
        <ecNumber evidence="1">4.2.1.59</ecNumber>
    </recommendedName>
    <alternativeName>
        <fullName evidence="1">3-hydroxyacyl-[acyl-carrier-protein] dehydratase FabA</fullName>
    </alternativeName>
    <alternativeName>
        <fullName evidence="1">Beta-hydroxydecanoyl thioester dehydrase</fullName>
    </alternativeName>
    <alternativeName>
        <fullName evidence="1">Trans-2-decenoyl-[acyl-carrier-protein] isomerase</fullName>
        <ecNumber evidence="1">5.3.3.14</ecNumber>
    </alternativeName>
</protein>